<organism>
    <name type="scientific">Legionella pneumophila subsp. pneumophila (strain Philadelphia 1 / ATCC 33152 / DSM 7513)</name>
    <dbReference type="NCBI Taxonomy" id="272624"/>
    <lineage>
        <taxon>Bacteria</taxon>
        <taxon>Pseudomonadati</taxon>
        <taxon>Pseudomonadota</taxon>
        <taxon>Gammaproteobacteria</taxon>
        <taxon>Legionellales</taxon>
        <taxon>Legionellaceae</taxon>
        <taxon>Legionella</taxon>
    </lineage>
</organism>
<feature type="chain" id="PRO_1000003525" description="Small ribosomal subunit protein bS18">
    <location>
        <begin position="1"/>
        <end position="75"/>
    </location>
</feature>
<reference key="1">
    <citation type="journal article" date="2004" name="Science">
        <title>The genomic sequence of the accidental pathogen Legionella pneumophila.</title>
        <authorList>
            <person name="Chien M."/>
            <person name="Morozova I."/>
            <person name="Shi S."/>
            <person name="Sheng H."/>
            <person name="Chen J."/>
            <person name="Gomez S.M."/>
            <person name="Asamani G."/>
            <person name="Hill K."/>
            <person name="Nuara J."/>
            <person name="Feder M."/>
            <person name="Rineer J."/>
            <person name="Greenberg J.J."/>
            <person name="Steshenko V."/>
            <person name="Park S.H."/>
            <person name="Zhao B."/>
            <person name="Teplitskaya E."/>
            <person name="Edwards J.R."/>
            <person name="Pampou S."/>
            <person name="Georghiou A."/>
            <person name="Chou I.-C."/>
            <person name="Iannuccilli W."/>
            <person name="Ulz M.E."/>
            <person name="Kim D.H."/>
            <person name="Geringer-Sameth A."/>
            <person name="Goldsberry C."/>
            <person name="Morozov P."/>
            <person name="Fischer S.G."/>
            <person name="Segal G."/>
            <person name="Qu X."/>
            <person name="Rzhetsky A."/>
            <person name="Zhang P."/>
            <person name="Cayanis E."/>
            <person name="De Jong P.J."/>
            <person name="Ju J."/>
            <person name="Kalachikov S."/>
            <person name="Shuman H.A."/>
            <person name="Russo J.J."/>
        </authorList>
    </citation>
    <scope>NUCLEOTIDE SEQUENCE [LARGE SCALE GENOMIC DNA]</scope>
    <source>
        <strain>Philadelphia 1 / ATCC 33152 / DSM 7513</strain>
    </source>
</reference>
<sequence>MSAYFRRKKMCRFSAEGGNEIDYKDINLLKNYITETGKIVPSRITGTQTRFQRQLAKAIKHARFIGLLPYCDSHR</sequence>
<comment type="function">
    <text evidence="1">Binds as a heterodimer with protein bS6 to the central domain of the 16S rRNA, where it helps stabilize the platform of the 30S subunit.</text>
</comment>
<comment type="subunit">
    <text evidence="1">Part of the 30S ribosomal subunit. Forms a tight heterodimer with protein bS6.</text>
</comment>
<comment type="similarity">
    <text evidence="1">Belongs to the bacterial ribosomal protein bS18 family.</text>
</comment>
<accession>Q5ZV49</accession>
<keyword id="KW-1185">Reference proteome</keyword>
<keyword id="KW-0687">Ribonucleoprotein</keyword>
<keyword id="KW-0689">Ribosomal protein</keyword>
<keyword id="KW-0694">RNA-binding</keyword>
<keyword id="KW-0699">rRNA-binding</keyword>
<dbReference type="EMBL" id="AE017354">
    <property type="protein sequence ID" value="AAU27673.1"/>
    <property type="molecule type" value="Genomic_DNA"/>
</dbReference>
<dbReference type="RefSeq" id="WP_010947320.1">
    <property type="nucleotide sequence ID" value="NC_002942.5"/>
</dbReference>
<dbReference type="RefSeq" id="YP_095620.1">
    <property type="nucleotide sequence ID" value="NC_002942.5"/>
</dbReference>
<dbReference type="SMR" id="Q5ZV49"/>
<dbReference type="STRING" id="272624.lpg1591"/>
<dbReference type="PaxDb" id="272624-lpg1591"/>
<dbReference type="GeneID" id="57035582"/>
<dbReference type="KEGG" id="lpn:lpg1591"/>
<dbReference type="PATRIC" id="fig|272624.6.peg.1667"/>
<dbReference type="eggNOG" id="COG0238">
    <property type="taxonomic scope" value="Bacteria"/>
</dbReference>
<dbReference type="HOGENOM" id="CLU_148710_2_3_6"/>
<dbReference type="OrthoDB" id="9812008at2"/>
<dbReference type="Proteomes" id="UP000000609">
    <property type="component" value="Chromosome"/>
</dbReference>
<dbReference type="GO" id="GO:0022627">
    <property type="term" value="C:cytosolic small ribosomal subunit"/>
    <property type="evidence" value="ECO:0007669"/>
    <property type="project" value="TreeGrafter"/>
</dbReference>
<dbReference type="GO" id="GO:0070181">
    <property type="term" value="F:small ribosomal subunit rRNA binding"/>
    <property type="evidence" value="ECO:0007669"/>
    <property type="project" value="TreeGrafter"/>
</dbReference>
<dbReference type="GO" id="GO:0003735">
    <property type="term" value="F:structural constituent of ribosome"/>
    <property type="evidence" value="ECO:0007669"/>
    <property type="project" value="InterPro"/>
</dbReference>
<dbReference type="GO" id="GO:0006412">
    <property type="term" value="P:translation"/>
    <property type="evidence" value="ECO:0007669"/>
    <property type="project" value="UniProtKB-UniRule"/>
</dbReference>
<dbReference type="Gene3D" id="4.10.640.10">
    <property type="entry name" value="Ribosomal protein S18"/>
    <property type="match status" value="1"/>
</dbReference>
<dbReference type="HAMAP" id="MF_00270">
    <property type="entry name" value="Ribosomal_bS18"/>
    <property type="match status" value="1"/>
</dbReference>
<dbReference type="InterPro" id="IPR001648">
    <property type="entry name" value="Ribosomal_bS18"/>
</dbReference>
<dbReference type="InterPro" id="IPR018275">
    <property type="entry name" value="Ribosomal_bS18_CS"/>
</dbReference>
<dbReference type="InterPro" id="IPR036870">
    <property type="entry name" value="Ribosomal_bS18_sf"/>
</dbReference>
<dbReference type="NCBIfam" id="TIGR00165">
    <property type="entry name" value="S18"/>
    <property type="match status" value="1"/>
</dbReference>
<dbReference type="PANTHER" id="PTHR13479">
    <property type="entry name" value="30S RIBOSOMAL PROTEIN S18"/>
    <property type="match status" value="1"/>
</dbReference>
<dbReference type="PANTHER" id="PTHR13479:SF40">
    <property type="entry name" value="SMALL RIBOSOMAL SUBUNIT PROTEIN BS18M"/>
    <property type="match status" value="1"/>
</dbReference>
<dbReference type="Pfam" id="PF01084">
    <property type="entry name" value="Ribosomal_S18"/>
    <property type="match status" value="1"/>
</dbReference>
<dbReference type="PRINTS" id="PR00974">
    <property type="entry name" value="RIBOSOMALS18"/>
</dbReference>
<dbReference type="SUPFAM" id="SSF46911">
    <property type="entry name" value="Ribosomal protein S18"/>
    <property type="match status" value="1"/>
</dbReference>
<dbReference type="PROSITE" id="PS00057">
    <property type="entry name" value="RIBOSOMAL_S18"/>
    <property type="match status" value="1"/>
</dbReference>
<proteinExistence type="inferred from homology"/>
<evidence type="ECO:0000255" key="1">
    <source>
        <dbReference type="HAMAP-Rule" id="MF_00270"/>
    </source>
</evidence>
<evidence type="ECO:0000305" key="2"/>
<gene>
    <name evidence="1" type="primary">rpsR</name>
    <name type="ordered locus">lpg1591</name>
</gene>
<name>RS18_LEGPH</name>
<protein>
    <recommendedName>
        <fullName evidence="1">Small ribosomal subunit protein bS18</fullName>
    </recommendedName>
    <alternativeName>
        <fullName evidence="2">30S ribosomal protein S18</fullName>
    </alternativeName>
</protein>